<evidence type="ECO:0000255" key="1"/>
<evidence type="ECO:0000256" key="2">
    <source>
        <dbReference type="SAM" id="MobiDB-lite"/>
    </source>
</evidence>
<evidence type="ECO:0000269" key="3">
    <source>
    </source>
</evidence>
<evidence type="ECO:0000303" key="4">
    <source>
    </source>
</evidence>
<evidence type="ECO:0000303" key="5">
    <source>
    </source>
</evidence>
<evidence type="ECO:0000303" key="6">
    <source ref="1"/>
</evidence>
<evidence type="ECO:0000305" key="7"/>
<evidence type="ECO:0000312" key="8">
    <source>
        <dbReference type="EMBL" id="BAB93392.1"/>
    </source>
</evidence>
<evidence type="ECO:0000312" key="9">
    <source>
        <dbReference type="EMBL" id="BAD88380.1"/>
    </source>
</evidence>
<evidence type="ECO:0000312" key="10">
    <source>
        <dbReference type="EMBL" id="BAS71759.1"/>
    </source>
</evidence>
<evidence type="ECO:0000312" key="11">
    <source>
        <dbReference type="EMBL" id="EEE54420.1"/>
    </source>
</evidence>
<reference key="1">
    <citation type="submission" date="2020-05" db="EMBL/GenBank/DDBJ databases">
        <title>Selection of salt-tolerant silage rice through in vitro screening and saltol QTL analysis.</title>
        <authorList>
            <person name="Cho C."/>
            <person name="Kim K.H."/>
            <person name="Ahn E.-K."/>
            <person name="Park H."/>
            <person name="Choi M.-S."/>
            <person name="Chun J."/>
            <person name="Seo M.-S."/>
            <person name="Jin M."/>
            <person name="Kim D.-Y."/>
        </authorList>
    </citation>
    <scope>NUCLEOTIDE SEQUENCE [GENOMIC DNA]</scope>
</reference>
<reference key="2">
    <citation type="journal article" date="2002" name="Nature">
        <title>The genome sequence and structure of rice chromosome 1.</title>
        <authorList>
            <person name="Sasaki T."/>
            <person name="Matsumoto T."/>
            <person name="Yamamoto K."/>
            <person name="Sakata K."/>
            <person name="Baba T."/>
            <person name="Katayose Y."/>
            <person name="Wu J."/>
            <person name="Niimura Y."/>
            <person name="Cheng Z."/>
            <person name="Nagamura Y."/>
            <person name="Antonio B.A."/>
            <person name="Kanamori H."/>
            <person name="Hosokawa S."/>
            <person name="Masukawa M."/>
            <person name="Arikawa K."/>
            <person name="Chiden Y."/>
            <person name="Hayashi M."/>
            <person name="Okamoto M."/>
            <person name="Ando T."/>
            <person name="Aoki H."/>
            <person name="Arita K."/>
            <person name="Hamada M."/>
            <person name="Harada C."/>
            <person name="Hijishita S."/>
            <person name="Honda M."/>
            <person name="Ichikawa Y."/>
            <person name="Idonuma A."/>
            <person name="Iijima M."/>
            <person name="Ikeda M."/>
            <person name="Ikeno M."/>
            <person name="Ito S."/>
            <person name="Ito T."/>
            <person name="Ito Y."/>
            <person name="Ito Y."/>
            <person name="Iwabuchi A."/>
            <person name="Kamiya K."/>
            <person name="Karasawa W."/>
            <person name="Katagiri S."/>
            <person name="Kikuta A."/>
            <person name="Kobayashi N."/>
            <person name="Kono I."/>
            <person name="Machita K."/>
            <person name="Maehara T."/>
            <person name="Mizuno H."/>
            <person name="Mizubayashi T."/>
            <person name="Mukai Y."/>
            <person name="Nagasaki H."/>
            <person name="Nakashima M."/>
            <person name="Nakama Y."/>
            <person name="Nakamichi Y."/>
            <person name="Nakamura M."/>
            <person name="Namiki N."/>
            <person name="Negishi M."/>
            <person name="Ohta I."/>
            <person name="Ono N."/>
            <person name="Saji S."/>
            <person name="Sakai K."/>
            <person name="Shibata M."/>
            <person name="Shimokawa T."/>
            <person name="Shomura A."/>
            <person name="Song J."/>
            <person name="Takazaki Y."/>
            <person name="Terasawa K."/>
            <person name="Tsuji K."/>
            <person name="Waki K."/>
            <person name="Yamagata H."/>
            <person name="Yamane H."/>
            <person name="Yoshiki S."/>
            <person name="Yoshihara R."/>
            <person name="Yukawa K."/>
            <person name="Zhong H."/>
            <person name="Iwama H."/>
            <person name="Endo T."/>
            <person name="Ito H."/>
            <person name="Hahn J.H."/>
            <person name="Kim H.-I."/>
            <person name="Eun M.-Y."/>
            <person name="Yano M."/>
            <person name="Jiang J."/>
            <person name="Gojobori T."/>
        </authorList>
    </citation>
    <scope>NUCLEOTIDE SEQUENCE [LARGE SCALE GENOMIC DNA]</scope>
    <source>
        <strain>cv. Nipponbare</strain>
    </source>
</reference>
<reference key="3">
    <citation type="journal article" date="2005" name="Nature">
        <title>The map-based sequence of the rice genome.</title>
        <authorList>
            <consortium name="International rice genome sequencing project (IRGSP)"/>
        </authorList>
    </citation>
    <scope>NUCLEOTIDE SEQUENCE [LARGE SCALE GENOMIC DNA]</scope>
    <source>
        <strain>cv. Nipponbare</strain>
    </source>
</reference>
<reference key="4">
    <citation type="journal article" date="2008" name="Nucleic Acids Res.">
        <title>The rice annotation project database (RAP-DB): 2008 update.</title>
        <authorList>
            <consortium name="The rice annotation project (RAP)"/>
        </authorList>
    </citation>
    <scope>GENOME REANNOTATION</scope>
    <source>
        <strain>cv. Nipponbare</strain>
    </source>
</reference>
<reference key="5">
    <citation type="journal article" date="2013" name="Rice">
        <title>Improvement of the Oryza sativa Nipponbare reference genome using next generation sequence and optical map data.</title>
        <authorList>
            <person name="Kawahara Y."/>
            <person name="de la Bastide M."/>
            <person name="Hamilton J.P."/>
            <person name="Kanamori H."/>
            <person name="McCombie W.R."/>
            <person name="Ouyang S."/>
            <person name="Schwartz D.C."/>
            <person name="Tanaka T."/>
            <person name="Wu J."/>
            <person name="Zhou S."/>
            <person name="Childs K.L."/>
            <person name="Davidson R.M."/>
            <person name="Lin H."/>
            <person name="Quesada-Ocampo L."/>
            <person name="Vaillancourt B."/>
            <person name="Sakai H."/>
            <person name="Lee S.S."/>
            <person name="Kim J."/>
            <person name="Numa H."/>
            <person name="Itoh T."/>
            <person name="Buell C.R."/>
            <person name="Matsumoto T."/>
        </authorList>
    </citation>
    <scope>GENOME REANNOTATION</scope>
    <source>
        <strain>cv. Nipponbare</strain>
    </source>
</reference>
<reference key="6">
    <citation type="journal article" date="2005" name="PLoS Biol.">
        <title>The genomes of Oryza sativa: a history of duplications.</title>
        <authorList>
            <person name="Yu J."/>
            <person name="Wang J."/>
            <person name="Lin W."/>
            <person name="Li S."/>
            <person name="Li H."/>
            <person name="Zhou J."/>
            <person name="Ni P."/>
            <person name="Dong W."/>
            <person name="Hu S."/>
            <person name="Zeng C."/>
            <person name="Zhang J."/>
            <person name="Zhang Y."/>
            <person name="Li R."/>
            <person name="Xu Z."/>
            <person name="Li S."/>
            <person name="Li X."/>
            <person name="Zheng H."/>
            <person name="Cong L."/>
            <person name="Lin L."/>
            <person name="Yin J."/>
            <person name="Geng J."/>
            <person name="Li G."/>
            <person name="Shi J."/>
            <person name="Liu J."/>
            <person name="Lv H."/>
            <person name="Li J."/>
            <person name="Wang J."/>
            <person name="Deng Y."/>
            <person name="Ran L."/>
            <person name="Shi X."/>
            <person name="Wang X."/>
            <person name="Wu Q."/>
            <person name="Li C."/>
            <person name="Ren X."/>
            <person name="Wang J."/>
            <person name="Wang X."/>
            <person name="Li D."/>
            <person name="Liu D."/>
            <person name="Zhang X."/>
            <person name="Ji Z."/>
            <person name="Zhao W."/>
            <person name="Sun Y."/>
            <person name="Zhang Z."/>
            <person name="Bao J."/>
            <person name="Han Y."/>
            <person name="Dong L."/>
            <person name="Ji J."/>
            <person name="Chen P."/>
            <person name="Wu S."/>
            <person name="Liu J."/>
            <person name="Xiao Y."/>
            <person name="Bu D."/>
            <person name="Tan J."/>
            <person name="Yang L."/>
            <person name="Ye C."/>
            <person name="Zhang J."/>
            <person name="Xu J."/>
            <person name="Zhou Y."/>
            <person name="Yu Y."/>
            <person name="Zhang B."/>
            <person name="Zhuang S."/>
            <person name="Wei H."/>
            <person name="Liu B."/>
            <person name="Lei M."/>
            <person name="Yu H."/>
            <person name="Li Y."/>
            <person name="Xu H."/>
            <person name="Wei S."/>
            <person name="He X."/>
            <person name="Fang L."/>
            <person name="Zhang Z."/>
            <person name="Zhang Y."/>
            <person name="Huang X."/>
            <person name="Su Z."/>
            <person name="Tong W."/>
            <person name="Li J."/>
            <person name="Tong Z."/>
            <person name="Li S."/>
            <person name="Ye J."/>
            <person name="Wang L."/>
            <person name="Fang L."/>
            <person name="Lei T."/>
            <person name="Chen C.-S."/>
            <person name="Chen H.-C."/>
            <person name="Xu Z."/>
            <person name="Li H."/>
            <person name="Huang H."/>
            <person name="Zhang F."/>
            <person name="Xu H."/>
            <person name="Li N."/>
            <person name="Zhao C."/>
            <person name="Li S."/>
            <person name="Dong L."/>
            <person name="Huang Y."/>
            <person name="Li L."/>
            <person name="Xi Y."/>
            <person name="Qi Q."/>
            <person name="Li W."/>
            <person name="Zhang B."/>
            <person name="Hu W."/>
            <person name="Zhang Y."/>
            <person name="Tian X."/>
            <person name="Jiao Y."/>
            <person name="Liang X."/>
            <person name="Jin J."/>
            <person name="Gao L."/>
            <person name="Zheng W."/>
            <person name="Hao B."/>
            <person name="Liu S.-M."/>
            <person name="Wang W."/>
            <person name="Yuan L."/>
            <person name="Cao M."/>
            <person name="McDermott J."/>
            <person name="Samudrala R."/>
            <person name="Wang J."/>
            <person name="Wong G.K.-S."/>
            <person name="Yang H."/>
        </authorList>
    </citation>
    <scope>NUCLEOTIDE SEQUENCE [LARGE SCALE GENOMIC DNA]</scope>
    <source>
        <strain>cv. Nipponbare</strain>
    </source>
</reference>
<reference key="7">
    <citation type="journal article" date="2003" name="Plant J.">
        <title>Sodium transport and HKT transporters: the rice model.</title>
        <authorList>
            <person name="Garciadeblas B."/>
            <person name="Senn M.E."/>
            <person name="Banuelos M.A."/>
            <person name="Rodriguez-Navarro A."/>
        </authorList>
    </citation>
    <scope>NOMENCLATURE</scope>
</reference>
<reference key="8">
    <citation type="journal article" date="2006" name="Trends Plant Sci.">
        <title>Nomenclature for HKT transporters, key determinants of plant salinity tolerance.</title>
        <authorList>
            <person name="Platten J.D."/>
            <person name="Cotsaftis O."/>
            <person name="Berthomieu P."/>
            <person name="Bohnert H."/>
            <person name="Davenport R.J."/>
            <person name="Fairbairn D.J."/>
            <person name="Horie T."/>
            <person name="Leigh R.A."/>
            <person name="Lin H.X."/>
            <person name="Luan S."/>
            <person name="Maeser P."/>
            <person name="Pantoja O."/>
            <person name="Rodriguez-Navarro A."/>
            <person name="Schachtman D.P."/>
            <person name="Schroeder J.I."/>
            <person name="Sentenac H."/>
            <person name="Uozumi N."/>
            <person name="Very A.A."/>
            <person name="Zhu J.K."/>
            <person name="Dennis E.S."/>
            <person name="Tester M."/>
        </authorList>
    </citation>
    <scope>GENE FAMILY</scope>
    <scope>NOMENCLATURE</scope>
</reference>
<reference key="9">
    <citation type="journal article" date="2017" name="Plant J.">
        <title>OsHKT1;5 mediates Na+ exclusion in the vasculature to protect leaf blades and reproductive tissues from salt toxicity in rice.</title>
        <authorList>
            <person name="Kobayashi N.I."/>
            <person name="Yamaji N."/>
            <person name="Yamamoto H."/>
            <person name="Okubo K."/>
            <person name="Ueno H."/>
            <person name="Costa A."/>
            <person name="Tanoi K."/>
            <person name="Matsumura H."/>
            <person name="Fujii-Kashino M."/>
            <person name="Horiuchi T."/>
            <person name="Nayef M.A."/>
            <person name="Shabala S."/>
            <person name="An G."/>
            <person name="Ma J.F."/>
            <person name="Horie T."/>
        </authorList>
    </citation>
    <scope>FUNCTION</scope>
    <scope>SUBCELLULAR LOCATION</scope>
    <scope>TISSUE SPECIFICITY</scope>
</reference>
<name>HKT15_ORYSJ</name>
<proteinExistence type="evidence at protein level"/>
<comment type="function">
    <text evidence="3">Sodium transporter that under salt stress mediates sodium exclusion in the phloem to prevent sodium transfer to young leaf blades and reproductive tissues.</text>
</comment>
<comment type="catalytic activity">
    <reaction evidence="3">
        <text>Na(+)(in) = Na(+)(out)</text>
        <dbReference type="Rhea" id="RHEA:34963"/>
        <dbReference type="ChEBI" id="CHEBI:29101"/>
    </reaction>
</comment>
<comment type="subcellular location">
    <subcellularLocation>
        <location evidence="3">Cell membrane</location>
        <topology evidence="1">Multi-pass membrane protein</topology>
    </subcellularLocation>
    <text evidence="3">Localizes to the plasma membrane.</text>
</comment>
<comment type="tissue specificity">
    <text evidence="3">In roots, expressed in cells next to the protoxylem and the metaxylem I (PubMed:28488420). In basal nodes, expressed in the phloem of some diffuse vascular bundles (PubMed:28488420).</text>
</comment>
<comment type="domain">
    <text evidence="7">HKT transporters are proposed to contain 4 pore-forming regions enclosed by transmembrane segments with each containing a potassium channel-like selectivity filter motif.</text>
</comment>
<comment type="miscellaneous">
    <text>Substitution of Pro-140, Arg-184, His-332 and Leu-395 in salt-tolerant cultivars indica Nona Bokra and Pokkali confers enhanced sodium transport activity.</text>
</comment>
<comment type="similarity">
    <text evidence="7">Belongs to the TrkH potassium transport family. HKT (TC 2.A.38.3) subfamily.</text>
</comment>
<gene>
    <name evidence="5" type="primary">HKT1;5</name>
    <name evidence="4" type="synonym">HKT8</name>
    <name evidence="6" type="synonym">SKC1</name>
    <name evidence="10" type="ordered locus">Os01g0307500</name>
    <name evidence="7" type="ordered locus">LOC_Os01g20160</name>
    <name evidence="11" type="ORF">OsJ_01471</name>
    <name evidence="8" type="ORF">OSJNBb0022N24.25</name>
    <name evidence="9" type="ORF">OSJNOa173H09.1</name>
</gene>
<dbReference type="EMBL" id="MT495788">
    <property type="protein sequence ID" value="QXE97982.1"/>
    <property type="molecule type" value="Genomic_DNA"/>
</dbReference>
<dbReference type="EMBL" id="AP003567">
    <property type="protein sequence ID" value="BAB93392.1"/>
    <property type="molecule type" value="Genomic_DNA"/>
</dbReference>
<dbReference type="EMBL" id="AP006856">
    <property type="protein sequence ID" value="BAD88380.1"/>
    <property type="molecule type" value="Genomic_DNA"/>
</dbReference>
<dbReference type="EMBL" id="AP008207">
    <property type="protein sequence ID" value="BAF04762.1"/>
    <property type="molecule type" value="Genomic_DNA"/>
</dbReference>
<dbReference type="EMBL" id="AP014957">
    <property type="protein sequence ID" value="BAS71759.1"/>
    <property type="molecule type" value="Genomic_DNA"/>
</dbReference>
<dbReference type="EMBL" id="CM000138">
    <property type="protein sequence ID" value="EEE54420.1"/>
    <property type="molecule type" value="Genomic_DNA"/>
</dbReference>
<dbReference type="RefSeq" id="XP_015631953.1">
    <property type="nucleotide sequence ID" value="XM_015776467.1"/>
</dbReference>
<dbReference type="PDB" id="8Y6L">
    <property type="method" value="EM"/>
    <property type="resolution" value="3.40 A"/>
    <property type="chains" value="A/B=1-123, A/B=197-554"/>
</dbReference>
<dbReference type="PDBsum" id="8Y6L"/>
<dbReference type="EMDB" id="EMD-38990"/>
<dbReference type="SMR" id="Q0JNB6"/>
<dbReference type="FunCoup" id="Q0JNB6">
    <property type="interactions" value="6"/>
</dbReference>
<dbReference type="STRING" id="39947.Q0JNB6"/>
<dbReference type="TCDB" id="2.A.38.3.10">
    <property type="family name" value="the k(+) transporter (trk) family"/>
</dbReference>
<dbReference type="PaxDb" id="39947-Q0JNB6"/>
<dbReference type="EnsemblPlants" id="Os01t0307500-01">
    <property type="protein sequence ID" value="Os01t0307500-01"/>
    <property type="gene ID" value="Os01g0307500"/>
</dbReference>
<dbReference type="Gramene" id="Os01t0307500-01">
    <property type="protein sequence ID" value="Os01t0307500-01"/>
    <property type="gene ID" value="Os01g0307500"/>
</dbReference>
<dbReference type="KEGG" id="dosa:Os01g0307500"/>
<dbReference type="eggNOG" id="KOG1341">
    <property type="taxonomic scope" value="Eukaryota"/>
</dbReference>
<dbReference type="HOGENOM" id="CLU_008384_2_0_1"/>
<dbReference type="InParanoid" id="Q0JNB6"/>
<dbReference type="OMA" id="QMELAGF"/>
<dbReference type="OrthoDB" id="9999863at2759"/>
<dbReference type="Proteomes" id="UP000000763">
    <property type="component" value="Chromosome 1"/>
</dbReference>
<dbReference type="Proteomes" id="UP000007752">
    <property type="component" value="Chromosome 1"/>
</dbReference>
<dbReference type="Proteomes" id="UP000059680">
    <property type="component" value="Chromosome 1"/>
</dbReference>
<dbReference type="GO" id="GO:0005886">
    <property type="term" value="C:plasma membrane"/>
    <property type="evidence" value="ECO:0000314"/>
    <property type="project" value="UniProtKB"/>
</dbReference>
<dbReference type="GO" id="GO:0008324">
    <property type="term" value="F:monoatomic cation transmembrane transporter activity"/>
    <property type="evidence" value="ECO:0000318"/>
    <property type="project" value="GO_Central"/>
</dbReference>
<dbReference type="GO" id="GO:2000649">
    <property type="term" value="P:regulation of sodium ion transmembrane transporter activity"/>
    <property type="evidence" value="ECO:0000314"/>
    <property type="project" value="UniProtKB"/>
</dbReference>
<dbReference type="GO" id="GO:0035725">
    <property type="term" value="P:sodium ion transmembrane transport"/>
    <property type="evidence" value="ECO:0000314"/>
    <property type="project" value="UniProtKB"/>
</dbReference>
<dbReference type="InterPro" id="IPR003445">
    <property type="entry name" value="Cat_transpt"/>
</dbReference>
<dbReference type="InterPro" id="IPR051143">
    <property type="entry name" value="TrkH_K-transport"/>
</dbReference>
<dbReference type="PANTHER" id="PTHR31064:SF30">
    <property type="entry name" value="HIGH-AFFINITY POTASSIUM TRANSPORT PROTEIN-RELATED"/>
    <property type="match status" value="1"/>
</dbReference>
<dbReference type="PANTHER" id="PTHR31064">
    <property type="entry name" value="POTASSIUM TRANSPORT PROTEIN DDB_G0292412-RELATED"/>
    <property type="match status" value="1"/>
</dbReference>
<dbReference type="Pfam" id="PF02386">
    <property type="entry name" value="TrkH"/>
    <property type="match status" value="1"/>
</dbReference>
<feature type="chain" id="PRO_0000070472" description="Cation transporter HKT1;5">
    <location>
        <begin position="1"/>
        <end position="554"/>
    </location>
</feature>
<feature type="topological domain" description="Cytoplasmic" evidence="1">
    <location>
        <begin position="1"/>
        <end position="25"/>
    </location>
</feature>
<feature type="transmembrane region" description="Helical; Name=1" evidence="1">
    <location>
        <begin position="26"/>
        <end position="46"/>
    </location>
</feature>
<feature type="transmembrane region" description="Helical; Name=2" evidence="1">
    <location>
        <begin position="90"/>
        <end position="110"/>
    </location>
</feature>
<feature type="topological domain" description="Cytoplasmic" evidence="1">
    <location>
        <begin position="111"/>
        <end position="207"/>
    </location>
</feature>
<feature type="transmembrane region" description="Helical; Name=3" evidence="1">
    <location>
        <begin position="208"/>
        <end position="230"/>
    </location>
</feature>
<feature type="transmembrane region" description="Helical; Name=4" evidence="1">
    <location>
        <begin position="280"/>
        <end position="300"/>
    </location>
</feature>
<feature type="topological domain" description="Cytoplasmic" evidence="1">
    <location>
        <begin position="301"/>
        <end position="341"/>
    </location>
</feature>
<feature type="transmembrane region" description="Helical; Name=5" evidence="1">
    <location>
        <begin position="342"/>
        <end position="362"/>
    </location>
</feature>
<feature type="transmembrane region" description="Helical; Name=6" evidence="1">
    <location>
        <begin position="403"/>
        <end position="423"/>
    </location>
</feature>
<feature type="topological domain" description="Cytoplasmic" evidence="1">
    <location>
        <begin position="424"/>
        <end position="443"/>
    </location>
</feature>
<feature type="transmembrane region" description="Helical; Name=7" evidence="1">
    <location>
        <begin position="444"/>
        <end position="464"/>
    </location>
</feature>
<feature type="transmembrane region" description="Helical; Name=8" evidence="1">
    <location>
        <begin position="518"/>
        <end position="538"/>
    </location>
</feature>
<feature type="topological domain" description="Cytoplasmic" evidence="1">
    <location>
        <begin position="539"/>
        <end position="554"/>
    </location>
</feature>
<feature type="region of interest" description="Disordered" evidence="2">
    <location>
        <begin position="127"/>
        <end position="147"/>
    </location>
</feature>
<accession>Q0JNB6</accession>
<accession>A0A8F4N2R0</accession>
<accession>B9EVS1</accession>
<accession>Q3YAF4</accession>
<accession>Q8LQB2</accession>
<organism>
    <name type="scientific">Oryza sativa subsp. japonica</name>
    <name type="common">Rice</name>
    <dbReference type="NCBI Taxonomy" id="39947"/>
    <lineage>
        <taxon>Eukaryota</taxon>
        <taxon>Viridiplantae</taxon>
        <taxon>Streptophyta</taxon>
        <taxon>Embryophyta</taxon>
        <taxon>Tracheophyta</taxon>
        <taxon>Spermatophyta</taxon>
        <taxon>Magnoliopsida</taxon>
        <taxon>Liliopsida</taxon>
        <taxon>Poales</taxon>
        <taxon>Poaceae</taxon>
        <taxon>BOP clade</taxon>
        <taxon>Oryzoideae</taxon>
        <taxon>Oryzeae</taxon>
        <taxon>Oryzinae</taxon>
        <taxon>Oryza</taxon>
        <taxon>Oryza sativa</taxon>
    </lineage>
</organism>
<protein>
    <recommendedName>
        <fullName evidence="5">Cation transporter HKT1;5</fullName>
        <shortName evidence="5">OsHKT1;5</shortName>
    </recommendedName>
    <alternativeName>
        <fullName evidence="4">Cation transporter HKT8</fullName>
        <shortName evidence="4">OsHKT8</shortName>
    </alternativeName>
</protein>
<keyword id="KW-0002">3D-structure</keyword>
<keyword id="KW-1003">Cell membrane</keyword>
<keyword id="KW-0406">Ion transport</keyword>
<keyword id="KW-0472">Membrane</keyword>
<keyword id="KW-1185">Reference proteome</keyword>
<keyword id="KW-0915">Sodium</keyword>
<keyword id="KW-0739">Sodium transport</keyword>
<keyword id="KW-0346">Stress response</keyword>
<keyword id="KW-0812">Transmembrane</keyword>
<keyword id="KW-1133">Transmembrane helix</keyword>
<keyword id="KW-0813">Transport</keyword>
<sequence length="554" mass="60218">MSSLDATTPRYDEFKRIYHLFLFHAHPFWLQLLYFLFISLLGFLMLKALPMKTSMVPRPMDLDLIFTSVSATTVSSMVAVEMESFSNSQLLLITLLMLLGGEVFTSILGLYFTNAKYSSKMIATLPDDDDHGGSGKPPPPTTSPSSTLVELELAPPMDVVVVNPTTTATTHDEVELGLGRRNKRGCTCTTTHTSSSSSASKTTTTRLLMFVVMGYHAVVHVAGYTAIVVYLSAVGGAGAVVAGKGISAHTFAIFTVVSTFANCGFVPTNEGMVSFRSFPGLLLLVMPHVLLGNTLFPVFLRLAIAALERVTGWPELGELLIRRRRGGGEGYHHLLPSSRTRFLALTVAVLVVAQLALFCAMEWGSDGLRGLTAGQKLVGALFMAVNSRHSGEMVLDLSTVSSAVVVLYVVMMYLPPYTTFVPVQDKHQQTGAQSGQEGSSSSSIWQKLLMSPLSCLAIFIVVICITERRQIADDPINYSVLNIVVEVISAYGNVGFSTGYSCARQVRPDGSCRDLWVGFSGKWSKQGKLTLMAVMFYGRLKKFSLHGGQAWKIE</sequence>